<sequence length="325" mass="36608">MIKLLYPEFWQKRNIIAYLLLPISLIYQFLGYLRASLARPIMLPAKVICVGNCSVGGTGKTQIVMYLAKLLRAKNVSFVIVTKAYGSNLKSATTIHQGHTALEVGDEGVILAKYGTVIATKNIKEILPLINELKPDIIIIDDFLQNPYFHKDFTIVSVDSQRLFGNGFLIPAGPLRQYPNKALDTADLIFLVSSTNDKIPNILTPYIDKLINAQIIPSSDVDKTKNYFAFSGIGNPERFFSTLKNYGLNITGYKIFPDHYNYLQADLENLYSLAKEHNATLITTRKDHIKFNDLNNNIVCLDVELSINNPDLLNEKIFKKAQIFN</sequence>
<protein>
    <recommendedName>
        <fullName evidence="1">Tetraacyldisaccharide 4'-kinase</fullName>
        <ecNumber evidence="1">2.7.1.130</ecNumber>
    </recommendedName>
    <alternativeName>
        <fullName evidence="1">Lipid A 4'-kinase</fullName>
    </alternativeName>
</protein>
<proteinExistence type="inferred from homology"/>
<comment type="function">
    <text evidence="1">Transfers the gamma-phosphate of ATP to the 4'-position of a tetraacyldisaccharide 1-phosphate intermediate (termed DS-1-P) to form tetraacyldisaccharide 1,4'-bis-phosphate (lipid IVA).</text>
</comment>
<comment type="catalytic activity">
    <reaction evidence="1">
        <text>a lipid A disaccharide + ATP = a lipid IVA + ADP + H(+)</text>
        <dbReference type="Rhea" id="RHEA:67840"/>
        <dbReference type="ChEBI" id="CHEBI:15378"/>
        <dbReference type="ChEBI" id="CHEBI:30616"/>
        <dbReference type="ChEBI" id="CHEBI:176343"/>
        <dbReference type="ChEBI" id="CHEBI:176425"/>
        <dbReference type="ChEBI" id="CHEBI:456216"/>
        <dbReference type="EC" id="2.7.1.130"/>
    </reaction>
</comment>
<comment type="pathway">
    <text evidence="1">Glycolipid biosynthesis; lipid IV(A) biosynthesis; lipid IV(A) from (3R)-3-hydroxytetradecanoyl-[acyl-carrier-protein] and UDP-N-acetyl-alpha-D-glucosamine: step 6/6.</text>
</comment>
<comment type="similarity">
    <text evidence="1">Belongs to the LpxK family.</text>
</comment>
<organism>
    <name type="scientific">Rickettsia felis (strain ATCC VR-1525 / URRWXCal2)</name>
    <name type="common">Rickettsia azadi</name>
    <dbReference type="NCBI Taxonomy" id="315456"/>
    <lineage>
        <taxon>Bacteria</taxon>
        <taxon>Pseudomonadati</taxon>
        <taxon>Pseudomonadota</taxon>
        <taxon>Alphaproteobacteria</taxon>
        <taxon>Rickettsiales</taxon>
        <taxon>Rickettsiaceae</taxon>
        <taxon>Rickettsieae</taxon>
        <taxon>Rickettsia</taxon>
        <taxon>spotted fever group</taxon>
    </lineage>
</organism>
<accession>Q4UN11</accession>
<evidence type="ECO:0000255" key="1">
    <source>
        <dbReference type="HAMAP-Rule" id="MF_00409"/>
    </source>
</evidence>
<gene>
    <name evidence="1" type="primary">lpxK</name>
    <name type="ordered locus">RF_0196</name>
</gene>
<dbReference type="EC" id="2.7.1.130" evidence="1"/>
<dbReference type="EMBL" id="CP000053">
    <property type="protein sequence ID" value="AAY61047.1"/>
    <property type="molecule type" value="Genomic_DNA"/>
</dbReference>
<dbReference type="SMR" id="Q4UN11"/>
<dbReference type="STRING" id="315456.RF_0196"/>
<dbReference type="KEGG" id="rfe:RF_0196"/>
<dbReference type="eggNOG" id="COG1663">
    <property type="taxonomic scope" value="Bacteria"/>
</dbReference>
<dbReference type="HOGENOM" id="CLU_038816_0_0_5"/>
<dbReference type="OrthoDB" id="9766423at2"/>
<dbReference type="UniPathway" id="UPA00359">
    <property type="reaction ID" value="UER00482"/>
</dbReference>
<dbReference type="Proteomes" id="UP000008548">
    <property type="component" value="Chromosome"/>
</dbReference>
<dbReference type="GO" id="GO:0005886">
    <property type="term" value="C:plasma membrane"/>
    <property type="evidence" value="ECO:0007669"/>
    <property type="project" value="TreeGrafter"/>
</dbReference>
<dbReference type="GO" id="GO:0005524">
    <property type="term" value="F:ATP binding"/>
    <property type="evidence" value="ECO:0007669"/>
    <property type="project" value="UniProtKB-UniRule"/>
</dbReference>
<dbReference type="GO" id="GO:0009029">
    <property type="term" value="F:tetraacyldisaccharide 4'-kinase activity"/>
    <property type="evidence" value="ECO:0007669"/>
    <property type="project" value="UniProtKB-UniRule"/>
</dbReference>
<dbReference type="GO" id="GO:0009245">
    <property type="term" value="P:lipid A biosynthetic process"/>
    <property type="evidence" value="ECO:0007669"/>
    <property type="project" value="UniProtKB-UniRule"/>
</dbReference>
<dbReference type="GO" id="GO:0009244">
    <property type="term" value="P:lipopolysaccharide core region biosynthetic process"/>
    <property type="evidence" value="ECO:0007669"/>
    <property type="project" value="TreeGrafter"/>
</dbReference>
<dbReference type="HAMAP" id="MF_00409">
    <property type="entry name" value="LpxK"/>
    <property type="match status" value="1"/>
</dbReference>
<dbReference type="InterPro" id="IPR003758">
    <property type="entry name" value="LpxK"/>
</dbReference>
<dbReference type="InterPro" id="IPR027417">
    <property type="entry name" value="P-loop_NTPase"/>
</dbReference>
<dbReference type="NCBIfam" id="TIGR00682">
    <property type="entry name" value="lpxK"/>
    <property type="match status" value="1"/>
</dbReference>
<dbReference type="PANTHER" id="PTHR42724">
    <property type="entry name" value="TETRAACYLDISACCHARIDE 4'-KINASE"/>
    <property type="match status" value="1"/>
</dbReference>
<dbReference type="PANTHER" id="PTHR42724:SF1">
    <property type="entry name" value="TETRAACYLDISACCHARIDE 4'-KINASE, MITOCHONDRIAL-RELATED"/>
    <property type="match status" value="1"/>
</dbReference>
<dbReference type="Pfam" id="PF02606">
    <property type="entry name" value="LpxK"/>
    <property type="match status" value="1"/>
</dbReference>
<dbReference type="SUPFAM" id="SSF52540">
    <property type="entry name" value="P-loop containing nucleoside triphosphate hydrolases"/>
    <property type="match status" value="1"/>
</dbReference>
<keyword id="KW-0067">ATP-binding</keyword>
<keyword id="KW-0418">Kinase</keyword>
<keyword id="KW-0441">Lipid A biosynthesis</keyword>
<keyword id="KW-0444">Lipid biosynthesis</keyword>
<keyword id="KW-0443">Lipid metabolism</keyword>
<keyword id="KW-0547">Nucleotide-binding</keyword>
<keyword id="KW-0808">Transferase</keyword>
<name>LPXK_RICFE</name>
<reference key="1">
    <citation type="journal article" date="2005" name="PLoS Biol.">
        <title>The genome sequence of Rickettsia felis identifies the first putative conjugative plasmid in an obligate intracellular parasite.</title>
        <authorList>
            <person name="Ogata H."/>
            <person name="Renesto P."/>
            <person name="Audic S."/>
            <person name="Robert C."/>
            <person name="Blanc G."/>
            <person name="Fournier P.-E."/>
            <person name="Parinello H."/>
            <person name="Claverie J.-M."/>
            <person name="Raoult D."/>
        </authorList>
    </citation>
    <scope>NUCLEOTIDE SEQUENCE [LARGE SCALE GENOMIC DNA]</scope>
    <source>
        <strain>ATCC VR-1525 / URRWXCal2</strain>
    </source>
</reference>
<feature type="chain" id="PRO_0000229977" description="Tetraacyldisaccharide 4'-kinase">
    <location>
        <begin position="1"/>
        <end position="325"/>
    </location>
</feature>
<feature type="binding site" evidence="1">
    <location>
        <begin position="54"/>
        <end position="61"/>
    </location>
    <ligand>
        <name>ATP</name>
        <dbReference type="ChEBI" id="CHEBI:30616"/>
    </ligand>
</feature>